<dbReference type="EC" id="4.2.1.59" evidence="1"/>
<dbReference type="EMBL" id="CP001598">
    <property type="protein sequence ID" value="ACQ47929.1"/>
    <property type="molecule type" value="Genomic_DNA"/>
</dbReference>
<dbReference type="RefSeq" id="WP_000884318.1">
    <property type="nucleotide sequence ID" value="NC_012659.1"/>
</dbReference>
<dbReference type="SMR" id="C3P1B5"/>
<dbReference type="GeneID" id="93005856"/>
<dbReference type="KEGG" id="bai:BAA_5534"/>
<dbReference type="HOGENOM" id="CLU_078912_3_0_9"/>
<dbReference type="GO" id="GO:0005737">
    <property type="term" value="C:cytoplasm"/>
    <property type="evidence" value="ECO:0007669"/>
    <property type="project" value="UniProtKB-SubCell"/>
</dbReference>
<dbReference type="GO" id="GO:0016020">
    <property type="term" value="C:membrane"/>
    <property type="evidence" value="ECO:0007669"/>
    <property type="project" value="GOC"/>
</dbReference>
<dbReference type="GO" id="GO:0019171">
    <property type="term" value="F:(3R)-hydroxyacyl-[acyl-carrier-protein] dehydratase activity"/>
    <property type="evidence" value="ECO:0007669"/>
    <property type="project" value="UniProtKB-EC"/>
</dbReference>
<dbReference type="GO" id="GO:0006633">
    <property type="term" value="P:fatty acid biosynthetic process"/>
    <property type="evidence" value="ECO:0007669"/>
    <property type="project" value="UniProtKB-UniRule"/>
</dbReference>
<dbReference type="GO" id="GO:0009245">
    <property type="term" value="P:lipid A biosynthetic process"/>
    <property type="evidence" value="ECO:0007669"/>
    <property type="project" value="UniProtKB-UniRule"/>
</dbReference>
<dbReference type="CDD" id="cd01288">
    <property type="entry name" value="FabZ"/>
    <property type="match status" value="1"/>
</dbReference>
<dbReference type="FunFam" id="3.10.129.10:FF:000001">
    <property type="entry name" value="3-hydroxyacyl-[acyl-carrier-protein] dehydratase FabZ"/>
    <property type="match status" value="1"/>
</dbReference>
<dbReference type="Gene3D" id="3.10.129.10">
    <property type="entry name" value="Hotdog Thioesterase"/>
    <property type="match status" value="1"/>
</dbReference>
<dbReference type="HAMAP" id="MF_00406">
    <property type="entry name" value="FabZ"/>
    <property type="match status" value="1"/>
</dbReference>
<dbReference type="InterPro" id="IPR013114">
    <property type="entry name" value="FabA_FabZ"/>
</dbReference>
<dbReference type="InterPro" id="IPR010084">
    <property type="entry name" value="FabZ"/>
</dbReference>
<dbReference type="InterPro" id="IPR029069">
    <property type="entry name" value="HotDog_dom_sf"/>
</dbReference>
<dbReference type="NCBIfam" id="TIGR01750">
    <property type="entry name" value="fabZ"/>
    <property type="match status" value="1"/>
</dbReference>
<dbReference type="NCBIfam" id="NF000582">
    <property type="entry name" value="PRK00006.1"/>
    <property type="match status" value="1"/>
</dbReference>
<dbReference type="PANTHER" id="PTHR30272">
    <property type="entry name" value="3-HYDROXYACYL-[ACYL-CARRIER-PROTEIN] DEHYDRATASE"/>
    <property type="match status" value="1"/>
</dbReference>
<dbReference type="PANTHER" id="PTHR30272:SF1">
    <property type="entry name" value="3-HYDROXYACYL-[ACYL-CARRIER-PROTEIN] DEHYDRATASE"/>
    <property type="match status" value="1"/>
</dbReference>
<dbReference type="Pfam" id="PF07977">
    <property type="entry name" value="FabA"/>
    <property type="match status" value="1"/>
</dbReference>
<dbReference type="SUPFAM" id="SSF54637">
    <property type="entry name" value="Thioesterase/thiol ester dehydrase-isomerase"/>
    <property type="match status" value="1"/>
</dbReference>
<reference key="1">
    <citation type="submission" date="2009-04" db="EMBL/GenBank/DDBJ databases">
        <title>Genome sequence of Bacillus anthracis A0248.</title>
        <authorList>
            <person name="Dodson R.J."/>
            <person name="Munk A.C."/>
            <person name="Bruce D."/>
            <person name="Detter C."/>
            <person name="Tapia R."/>
            <person name="Sutton G."/>
            <person name="Sims D."/>
            <person name="Brettin T."/>
        </authorList>
    </citation>
    <scope>NUCLEOTIDE SEQUENCE [LARGE SCALE GENOMIC DNA]</scope>
    <source>
        <strain>A0248</strain>
    </source>
</reference>
<sequence length="144" mass="16098">MLDIQQIKEIIPHRYPFLLVDKVLEVEEGKRAIGIKNVTANEEFFNGHFPDYPVMPGVLIVEALAQVGAVAMLKKEENRGRLAFFAGIDNCRFKRQVRPGDQLRLEVEMTRVRGAIGKGKAIATVDGEIACETEITFALGDKKE</sequence>
<feature type="chain" id="PRO_1000134685" description="3-hydroxyacyl-[acyl-carrier-protein] dehydratase FabZ">
    <location>
        <begin position="1"/>
        <end position="144"/>
    </location>
</feature>
<feature type="active site" evidence="1">
    <location>
        <position position="48"/>
    </location>
</feature>
<comment type="function">
    <text evidence="1">Involved in unsaturated fatty acids biosynthesis. Catalyzes the dehydration of short chain beta-hydroxyacyl-ACPs and long chain saturated and unsaturated beta-hydroxyacyl-ACPs.</text>
</comment>
<comment type="catalytic activity">
    <reaction evidence="1">
        <text>a (3R)-hydroxyacyl-[ACP] = a (2E)-enoyl-[ACP] + H2O</text>
        <dbReference type="Rhea" id="RHEA:13097"/>
        <dbReference type="Rhea" id="RHEA-COMP:9925"/>
        <dbReference type="Rhea" id="RHEA-COMP:9945"/>
        <dbReference type="ChEBI" id="CHEBI:15377"/>
        <dbReference type="ChEBI" id="CHEBI:78784"/>
        <dbReference type="ChEBI" id="CHEBI:78827"/>
        <dbReference type="EC" id="4.2.1.59"/>
    </reaction>
</comment>
<comment type="subcellular location">
    <subcellularLocation>
        <location evidence="1">Cytoplasm</location>
    </subcellularLocation>
</comment>
<comment type="similarity">
    <text evidence="1">Belongs to the thioester dehydratase family. FabZ subfamily.</text>
</comment>
<evidence type="ECO:0000255" key="1">
    <source>
        <dbReference type="HAMAP-Rule" id="MF_00406"/>
    </source>
</evidence>
<name>FABZ_BACAA</name>
<accession>C3P1B5</accession>
<protein>
    <recommendedName>
        <fullName evidence="1">3-hydroxyacyl-[acyl-carrier-protein] dehydratase FabZ</fullName>
        <ecNumber evidence="1">4.2.1.59</ecNumber>
    </recommendedName>
    <alternativeName>
        <fullName evidence="1">(3R)-hydroxymyristoyl-[acyl-carrier-protein] dehydratase</fullName>
        <shortName evidence="1">(3R)-hydroxymyristoyl-ACP dehydrase</shortName>
    </alternativeName>
    <alternativeName>
        <fullName evidence="1">Beta-hydroxyacyl-ACP dehydratase</fullName>
    </alternativeName>
</protein>
<gene>
    <name evidence="1" type="primary">fabZ</name>
    <name type="ordered locus">BAA_5534</name>
</gene>
<proteinExistence type="inferred from homology"/>
<keyword id="KW-0963">Cytoplasm</keyword>
<keyword id="KW-0441">Lipid A biosynthesis</keyword>
<keyword id="KW-0444">Lipid biosynthesis</keyword>
<keyword id="KW-0443">Lipid metabolism</keyword>
<keyword id="KW-0456">Lyase</keyword>
<organism>
    <name type="scientific">Bacillus anthracis (strain A0248)</name>
    <dbReference type="NCBI Taxonomy" id="592021"/>
    <lineage>
        <taxon>Bacteria</taxon>
        <taxon>Bacillati</taxon>
        <taxon>Bacillota</taxon>
        <taxon>Bacilli</taxon>
        <taxon>Bacillales</taxon>
        <taxon>Bacillaceae</taxon>
        <taxon>Bacillus</taxon>
        <taxon>Bacillus cereus group</taxon>
    </lineage>
</organism>